<comment type="function">
    <text evidence="1">Protease subunit of a proteasome-like degradation complex believed to be a general protein degrading machinery.</text>
</comment>
<comment type="catalytic activity">
    <reaction evidence="1">
        <text>ATP-dependent cleavage of peptide bonds with broad specificity.</text>
        <dbReference type="EC" id="3.4.25.2"/>
    </reaction>
</comment>
<comment type="activity regulation">
    <text evidence="1">Allosterically activated by HslU binding.</text>
</comment>
<comment type="subunit">
    <text evidence="1">A double ring-shaped homohexamer of HslV is capped on each side by a ring-shaped HslU homohexamer. The assembly of the HslU/HslV complex is dependent on binding of ATP.</text>
</comment>
<comment type="subcellular location">
    <subcellularLocation>
        <location evidence="1">Cytoplasm</location>
    </subcellularLocation>
</comment>
<comment type="similarity">
    <text evidence="1">Belongs to the peptidase T1B family. HslV subfamily.</text>
</comment>
<gene>
    <name evidence="1" type="primary">hslV</name>
    <name type="ordered locus">RT0309</name>
</gene>
<proteinExistence type="inferred from homology"/>
<accession>Q68X53</accession>
<evidence type="ECO:0000255" key="1">
    <source>
        <dbReference type="HAMAP-Rule" id="MF_00248"/>
    </source>
</evidence>
<protein>
    <recommendedName>
        <fullName evidence="1">ATP-dependent protease subunit HslV</fullName>
        <ecNumber evidence="1">3.4.25.2</ecNumber>
    </recommendedName>
</protein>
<name>HSLV_RICTY</name>
<keyword id="KW-0021">Allosteric enzyme</keyword>
<keyword id="KW-0963">Cytoplasm</keyword>
<keyword id="KW-0378">Hydrolase</keyword>
<keyword id="KW-0479">Metal-binding</keyword>
<keyword id="KW-0645">Protease</keyword>
<keyword id="KW-0915">Sodium</keyword>
<keyword id="KW-0888">Threonine protease</keyword>
<feature type="chain" id="PRO_0000148141" description="ATP-dependent protease subunit HslV">
    <location>
        <begin position="1"/>
        <end position="182"/>
    </location>
</feature>
<feature type="active site" evidence="1">
    <location>
        <position position="10"/>
    </location>
</feature>
<feature type="binding site" evidence="1">
    <location>
        <position position="166"/>
    </location>
    <ligand>
        <name>Na(+)</name>
        <dbReference type="ChEBI" id="CHEBI:29101"/>
    </ligand>
</feature>
<feature type="binding site" evidence="1">
    <location>
        <position position="169"/>
    </location>
    <ligand>
        <name>Na(+)</name>
        <dbReference type="ChEBI" id="CHEBI:29101"/>
    </ligand>
</feature>
<feature type="binding site" evidence="1">
    <location>
        <position position="172"/>
    </location>
    <ligand>
        <name>Na(+)</name>
        <dbReference type="ChEBI" id="CHEBI:29101"/>
    </ligand>
</feature>
<reference key="1">
    <citation type="journal article" date="2004" name="J. Bacteriol.">
        <title>Complete genome sequence of Rickettsia typhi and comparison with sequences of other Rickettsiae.</title>
        <authorList>
            <person name="McLeod M.P."/>
            <person name="Qin X."/>
            <person name="Karpathy S.E."/>
            <person name="Gioia J."/>
            <person name="Highlander S.K."/>
            <person name="Fox G.E."/>
            <person name="McNeill T.Z."/>
            <person name="Jiang H."/>
            <person name="Muzny D."/>
            <person name="Jacob L.S."/>
            <person name="Hawes A.C."/>
            <person name="Sodergren E."/>
            <person name="Gill R."/>
            <person name="Hume J."/>
            <person name="Morgan M."/>
            <person name="Fan G."/>
            <person name="Amin A.G."/>
            <person name="Gibbs R.A."/>
            <person name="Hong C."/>
            <person name="Yu X.-J."/>
            <person name="Walker D.H."/>
            <person name="Weinstock G.M."/>
        </authorList>
    </citation>
    <scope>NUCLEOTIDE SEQUENCE [LARGE SCALE GENOMIC DNA]</scope>
    <source>
        <strain>ATCC VR-144 / Wilmington</strain>
    </source>
</reference>
<sequence>MSDNLALHGTTILCLKKNEEIIIAADGQVSHGNTVLKSTARKLRTIANNKIIVGFAGSTADGLALFEKLEIKIEQYNSNLLRSAVELAKDWRNDKYLRRLEAMMIVADRSHILILTGNGDVIEPENNIAAIGSGGLFALSAARALMSYENNLTAEEIALKSMNIAADLCVFSNHNIIMEKVV</sequence>
<dbReference type="EC" id="3.4.25.2" evidence="1"/>
<dbReference type="EMBL" id="AE017197">
    <property type="protein sequence ID" value="AAU03789.1"/>
    <property type="molecule type" value="Genomic_DNA"/>
</dbReference>
<dbReference type="RefSeq" id="WP_011190773.1">
    <property type="nucleotide sequence ID" value="NC_006142.1"/>
</dbReference>
<dbReference type="SMR" id="Q68X53"/>
<dbReference type="KEGG" id="rty:RT0309"/>
<dbReference type="eggNOG" id="COG5405">
    <property type="taxonomic scope" value="Bacteria"/>
</dbReference>
<dbReference type="HOGENOM" id="CLU_093872_1_0_5"/>
<dbReference type="OrthoDB" id="9804884at2"/>
<dbReference type="Proteomes" id="UP000000604">
    <property type="component" value="Chromosome"/>
</dbReference>
<dbReference type="GO" id="GO:0009376">
    <property type="term" value="C:HslUV protease complex"/>
    <property type="evidence" value="ECO:0007669"/>
    <property type="project" value="UniProtKB-UniRule"/>
</dbReference>
<dbReference type="GO" id="GO:0005839">
    <property type="term" value="C:proteasome core complex"/>
    <property type="evidence" value="ECO:0007669"/>
    <property type="project" value="InterPro"/>
</dbReference>
<dbReference type="GO" id="GO:0046872">
    <property type="term" value="F:metal ion binding"/>
    <property type="evidence" value="ECO:0007669"/>
    <property type="project" value="UniProtKB-KW"/>
</dbReference>
<dbReference type="GO" id="GO:0004298">
    <property type="term" value="F:threonine-type endopeptidase activity"/>
    <property type="evidence" value="ECO:0007669"/>
    <property type="project" value="UniProtKB-KW"/>
</dbReference>
<dbReference type="GO" id="GO:0051603">
    <property type="term" value="P:proteolysis involved in protein catabolic process"/>
    <property type="evidence" value="ECO:0007669"/>
    <property type="project" value="InterPro"/>
</dbReference>
<dbReference type="CDD" id="cd01913">
    <property type="entry name" value="protease_HslV"/>
    <property type="match status" value="1"/>
</dbReference>
<dbReference type="Gene3D" id="3.60.20.10">
    <property type="entry name" value="Glutamine Phosphoribosylpyrophosphate, subunit 1, domain 1"/>
    <property type="match status" value="1"/>
</dbReference>
<dbReference type="HAMAP" id="MF_00248">
    <property type="entry name" value="HslV"/>
    <property type="match status" value="1"/>
</dbReference>
<dbReference type="InterPro" id="IPR022281">
    <property type="entry name" value="ATP-dep_Prtase_HsIV_su"/>
</dbReference>
<dbReference type="InterPro" id="IPR029055">
    <property type="entry name" value="Ntn_hydrolases_N"/>
</dbReference>
<dbReference type="InterPro" id="IPR001353">
    <property type="entry name" value="Proteasome_sua/b"/>
</dbReference>
<dbReference type="InterPro" id="IPR023333">
    <property type="entry name" value="Proteasome_suB-type"/>
</dbReference>
<dbReference type="NCBIfam" id="TIGR03692">
    <property type="entry name" value="ATP_dep_HslV"/>
    <property type="match status" value="1"/>
</dbReference>
<dbReference type="NCBIfam" id="NF003964">
    <property type="entry name" value="PRK05456.1"/>
    <property type="match status" value="1"/>
</dbReference>
<dbReference type="PANTHER" id="PTHR32194:SF0">
    <property type="entry name" value="ATP-DEPENDENT PROTEASE SUBUNIT HSLV"/>
    <property type="match status" value="1"/>
</dbReference>
<dbReference type="PANTHER" id="PTHR32194">
    <property type="entry name" value="METALLOPROTEASE TLDD"/>
    <property type="match status" value="1"/>
</dbReference>
<dbReference type="Pfam" id="PF00227">
    <property type="entry name" value="Proteasome"/>
    <property type="match status" value="1"/>
</dbReference>
<dbReference type="PIRSF" id="PIRSF039093">
    <property type="entry name" value="HslV"/>
    <property type="match status" value="1"/>
</dbReference>
<dbReference type="SUPFAM" id="SSF56235">
    <property type="entry name" value="N-terminal nucleophile aminohydrolases (Ntn hydrolases)"/>
    <property type="match status" value="1"/>
</dbReference>
<dbReference type="PROSITE" id="PS51476">
    <property type="entry name" value="PROTEASOME_BETA_2"/>
    <property type="match status" value="1"/>
</dbReference>
<organism>
    <name type="scientific">Rickettsia typhi (strain ATCC VR-144 / Wilmington)</name>
    <dbReference type="NCBI Taxonomy" id="257363"/>
    <lineage>
        <taxon>Bacteria</taxon>
        <taxon>Pseudomonadati</taxon>
        <taxon>Pseudomonadota</taxon>
        <taxon>Alphaproteobacteria</taxon>
        <taxon>Rickettsiales</taxon>
        <taxon>Rickettsiaceae</taxon>
        <taxon>Rickettsieae</taxon>
        <taxon>Rickettsia</taxon>
        <taxon>typhus group</taxon>
    </lineage>
</organism>